<sequence length="233" mass="25230">MIDQKVIVALDYDNQADALAFVDRIDPASCRLKVGKEMFTLFGPDFVRELHKRGFSVFLDLKFHDIPNTCSKAVRAAAELGVWMVNVHASGGERMMTASREILEPYGKDRPLLIGVTVLTSMEQSDLAGIGLDVAPQEQVIRLATLTKNSGLDGVVCSAQESSLLKNELGKEFKLVTPGIRPAGSEQGDQRRIMTPVDAIQAGSDYLVIGRPITQAADPASVLKSINDSLASM</sequence>
<protein>
    <recommendedName>
        <fullName evidence="1">Orotidine 5'-phosphate decarboxylase</fullName>
        <ecNumber evidence="1">4.1.1.23</ecNumber>
    </recommendedName>
    <alternativeName>
        <fullName evidence="1">OMP decarboxylase</fullName>
        <shortName evidence="1">OMPDCase</shortName>
        <shortName evidence="1">OMPdecase</shortName>
    </alternativeName>
</protein>
<dbReference type="EC" id="4.1.1.23" evidence="1"/>
<dbReference type="EMBL" id="CP000789">
    <property type="protein sequence ID" value="ABU71809.1"/>
    <property type="molecule type" value="Genomic_DNA"/>
</dbReference>
<dbReference type="RefSeq" id="WP_010645640.1">
    <property type="nucleotide sequence ID" value="NC_009783.1"/>
</dbReference>
<dbReference type="SMR" id="A7MUN7"/>
<dbReference type="KEGG" id="vha:VIBHAR_02856"/>
<dbReference type="PATRIC" id="fig|338187.25.peg.3329"/>
<dbReference type="UniPathway" id="UPA00070">
    <property type="reaction ID" value="UER00120"/>
</dbReference>
<dbReference type="Proteomes" id="UP000008152">
    <property type="component" value="Chromosome I"/>
</dbReference>
<dbReference type="GO" id="GO:0005829">
    <property type="term" value="C:cytosol"/>
    <property type="evidence" value="ECO:0007669"/>
    <property type="project" value="TreeGrafter"/>
</dbReference>
<dbReference type="GO" id="GO:0004590">
    <property type="term" value="F:orotidine-5'-phosphate decarboxylase activity"/>
    <property type="evidence" value="ECO:0007669"/>
    <property type="project" value="UniProtKB-UniRule"/>
</dbReference>
<dbReference type="GO" id="GO:0006207">
    <property type="term" value="P:'de novo' pyrimidine nucleobase biosynthetic process"/>
    <property type="evidence" value="ECO:0007669"/>
    <property type="project" value="InterPro"/>
</dbReference>
<dbReference type="GO" id="GO:0044205">
    <property type="term" value="P:'de novo' UMP biosynthetic process"/>
    <property type="evidence" value="ECO:0007669"/>
    <property type="project" value="UniProtKB-UniRule"/>
</dbReference>
<dbReference type="CDD" id="cd04725">
    <property type="entry name" value="OMP_decarboxylase_like"/>
    <property type="match status" value="1"/>
</dbReference>
<dbReference type="FunFam" id="3.20.20.70:FF:000015">
    <property type="entry name" value="Orotidine 5'-phosphate decarboxylase"/>
    <property type="match status" value="1"/>
</dbReference>
<dbReference type="Gene3D" id="3.20.20.70">
    <property type="entry name" value="Aldolase class I"/>
    <property type="match status" value="1"/>
</dbReference>
<dbReference type="HAMAP" id="MF_01200_B">
    <property type="entry name" value="OMPdecase_type1_B"/>
    <property type="match status" value="1"/>
</dbReference>
<dbReference type="InterPro" id="IPR013785">
    <property type="entry name" value="Aldolase_TIM"/>
</dbReference>
<dbReference type="InterPro" id="IPR014732">
    <property type="entry name" value="OMPdecase"/>
</dbReference>
<dbReference type="InterPro" id="IPR018089">
    <property type="entry name" value="OMPdecase_AS"/>
</dbReference>
<dbReference type="InterPro" id="IPR047596">
    <property type="entry name" value="OMPdecase_bac"/>
</dbReference>
<dbReference type="InterPro" id="IPR001754">
    <property type="entry name" value="OMPdeCOase_dom"/>
</dbReference>
<dbReference type="InterPro" id="IPR011060">
    <property type="entry name" value="RibuloseP-bd_barrel"/>
</dbReference>
<dbReference type="NCBIfam" id="NF001273">
    <property type="entry name" value="PRK00230.1"/>
    <property type="match status" value="1"/>
</dbReference>
<dbReference type="NCBIfam" id="TIGR01740">
    <property type="entry name" value="pyrF"/>
    <property type="match status" value="1"/>
</dbReference>
<dbReference type="PANTHER" id="PTHR32119">
    <property type="entry name" value="OROTIDINE 5'-PHOSPHATE DECARBOXYLASE"/>
    <property type="match status" value="1"/>
</dbReference>
<dbReference type="PANTHER" id="PTHR32119:SF2">
    <property type="entry name" value="OROTIDINE 5'-PHOSPHATE DECARBOXYLASE"/>
    <property type="match status" value="1"/>
</dbReference>
<dbReference type="Pfam" id="PF00215">
    <property type="entry name" value="OMPdecase"/>
    <property type="match status" value="1"/>
</dbReference>
<dbReference type="SMART" id="SM00934">
    <property type="entry name" value="OMPdecase"/>
    <property type="match status" value="1"/>
</dbReference>
<dbReference type="SUPFAM" id="SSF51366">
    <property type="entry name" value="Ribulose-phoshate binding barrel"/>
    <property type="match status" value="1"/>
</dbReference>
<dbReference type="PROSITE" id="PS00156">
    <property type="entry name" value="OMPDECASE"/>
    <property type="match status" value="1"/>
</dbReference>
<evidence type="ECO:0000255" key="1">
    <source>
        <dbReference type="HAMAP-Rule" id="MF_01200"/>
    </source>
</evidence>
<keyword id="KW-0210">Decarboxylase</keyword>
<keyword id="KW-0456">Lyase</keyword>
<keyword id="KW-0665">Pyrimidine biosynthesis</keyword>
<proteinExistence type="inferred from homology"/>
<name>PYRF_VIBC1</name>
<feature type="chain" id="PRO_1000065959" description="Orotidine 5'-phosphate decarboxylase">
    <location>
        <begin position="1"/>
        <end position="233"/>
    </location>
</feature>
<feature type="active site" description="Proton donor" evidence="1">
    <location>
        <position position="62"/>
    </location>
</feature>
<feature type="binding site" evidence="1">
    <location>
        <position position="11"/>
    </location>
    <ligand>
        <name>substrate</name>
    </ligand>
</feature>
<feature type="binding site" evidence="1">
    <location>
        <position position="33"/>
    </location>
    <ligand>
        <name>substrate</name>
    </ligand>
</feature>
<feature type="binding site" evidence="1">
    <location>
        <begin position="60"/>
        <end position="69"/>
    </location>
    <ligand>
        <name>substrate</name>
    </ligand>
</feature>
<feature type="binding site" evidence="1">
    <location>
        <position position="120"/>
    </location>
    <ligand>
        <name>substrate</name>
    </ligand>
</feature>
<feature type="binding site" evidence="1">
    <location>
        <position position="181"/>
    </location>
    <ligand>
        <name>substrate</name>
    </ligand>
</feature>
<feature type="binding site" evidence="1">
    <location>
        <position position="190"/>
    </location>
    <ligand>
        <name>substrate</name>
    </ligand>
</feature>
<feature type="binding site" evidence="1">
    <location>
        <position position="210"/>
    </location>
    <ligand>
        <name>substrate</name>
    </ligand>
</feature>
<feature type="binding site" evidence="1">
    <location>
        <position position="211"/>
    </location>
    <ligand>
        <name>substrate</name>
    </ligand>
</feature>
<gene>
    <name evidence="1" type="primary">pyrF</name>
    <name type="ordered locus">VIBHAR_02856</name>
</gene>
<accession>A7MUN7</accession>
<organism>
    <name type="scientific">Vibrio campbellii (strain ATCC BAA-1116)</name>
    <dbReference type="NCBI Taxonomy" id="2902295"/>
    <lineage>
        <taxon>Bacteria</taxon>
        <taxon>Pseudomonadati</taxon>
        <taxon>Pseudomonadota</taxon>
        <taxon>Gammaproteobacteria</taxon>
        <taxon>Vibrionales</taxon>
        <taxon>Vibrionaceae</taxon>
        <taxon>Vibrio</taxon>
    </lineage>
</organism>
<comment type="function">
    <text evidence="1">Catalyzes the decarboxylation of orotidine 5'-monophosphate (OMP) to uridine 5'-monophosphate (UMP).</text>
</comment>
<comment type="catalytic activity">
    <reaction evidence="1">
        <text>orotidine 5'-phosphate + H(+) = UMP + CO2</text>
        <dbReference type="Rhea" id="RHEA:11596"/>
        <dbReference type="ChEBI" id="CHEBI:15378"/>
        <dbReference type="ChEBI" id="CHEBI:16526"/>
        <dbReference type="ChEBI" id="CHEBI:57538"/>
        <dbReference type="ChEBI" id="CHEBI:57865"/>
        <dbReference type="EC" id="4.1.1.23"/>
    </reaction>
</comment>
<comment type="pathway">
    <text evidence="1">Pyrimidine metabolism; UMP biosynthesis via de novo pathway; UMP from orotate: step 2/2.</text>
</comment>
<comment type="subunit">
    <text evidence="1">Homodimer.</text>
</comment>
<comment type="similarity">
    <text evidence="1">Belongs to the OMP decarboxylase family. Type 1 subfamily.</text>
</comment>
<reference key="1">
    <citation type="submission" date="2007-08" db="EMBL/GenBank/DDBJ databases">
        <authorList>
            <consortium name="The Vibrio harveyi Genome Sequencing Project"/>
            <person name="Bassler B."/>
            <person name="Clifton S.W."/>
            <person name="Fulton L."/>
            <person name="Delehaunty K."/>
            <person name="Fronick C."/>
            <person name="Harrison M."/>
            <person name="Markivic C."/>
            <person name="Fulton R."/>
            <person name="Tin-Wollam A.-M."/>
            <person name="Shah N."/>
            <person name="Pepin K."/>
            <person name="Nash W."/>
            <person name="Thiruvilangam P."/>
            <person name="Bhonagiri V."/>
            <person name="Waters C."/>
            <person name="Tu K.C."/>
            <person name="Irgon J."/>
            <person name="Wilson R.K."/>
        </authorList>
    </citation>
    <scope>NUCLEOTIDE SEQUENCE [LARGE SCALE GENOMIC DNA]</scope>
    <source>
        <strain>ATCC BAA-1116 / BB120</strain>
    </source>
</reference>